<accession>A1TYJ4</accession>
<reference key="1">
    <citation type="journal article" date="2011" name="Appl. Environ. Microbiol.">
        <title>Genomic potential of Marinobacter aquaeolei, a biogeochemical 'opportunitroph'.</title>
        <authorList>
            <person name="Singer E."/>
            <person name="Webb E.A."/>
            <person name="Nelson W.C."/>
            <person name="Heidelberg J.F."/>
            <person name="Ivanova N."/>
            <person name="Pati A."/>
            <person name="Edwards K.J."/>
        </authorList>
    </citation>
    <scope>NUCLEOTIDE SEQUENCE [LARGE SCALE GENOMIC DNA]</scope>
    <source>
        <strain>ATCC 700491 / DSM 11845 / VT8</strain>
    </source>
</reference>
<proteinExistence type="inferred from homology"/>
<feature type="chain" id="PRO_1000008843" description="Elongation factor G">
    <location>
        <begin position="1"/>
        <end position="701"/>
    </location>
</feature>
<feature type="domain" description="tr-type G">
    <location>
        <begin position="8"/>
        <end position="290"/>
    </location>
</feature>
<feature type="binding site" evidence="1">
    <location>
        <begin position="17"/>
        <end position="24"/>
    </location>
    <ligand>
        <name>GTP</name>
        <dbReference type="ChEBI" id="CHEBI:37565"/>
    </ligand>
</feature>
<feature type="binding site" evidence="1">
    <location>
        <begin position="88"/>
        <end position="92"/>
    </location>
    <ligand>
        <name>GTP</name>
        <dbReference type="ChEBI" id="CHEBI:37565"/>
    </ligand>
</feature>
<feature type="binding site" evidence="1">
    <location>
        <begin position="142"/>
        <end position="145"/>
    </location>
    <ligand>
        <name>GTP</name>
        <dbReference type="ChEBI" id="CHEBI:37565"/>
    </ligand>
</feature>
<gene>
    <name evidence="1" type="primary">fusA</name>
    <name type="ordered locus">Maqu_0716</name>
</gene>
<sequence length="701" mass="77803">MARKTPIKRYRNIGICAHVDAGKTTTTERILYYTGRSHKMGETHDGASTTDWMEQEQERGITITSAAVTTFWQGMDKQYPEHRINIIDTPGHVDFTIEVERSLRVLDGAVVVFCGSSGVEPQSETVWRQANKYEVPRMVFVNKMDRAGANFMRVVEQIRNRLGATTVPIQLPIGAEDDFEGIVDLLRMKAIYWNEADQGMTYELRDIPESMKAEAEKAREQMIEAAAEANEEYMDKYLEGEELTYEEIKKGLRDRTIANEIVLATCGSAFKNKGVQAVLDAVIEFLPAPDEVKAIRGEVDDEGTEETRPVDDDAPFAALAFKIATDPFVGTLTFFRVYSGKLESGNAVFNSVKGKKERVGRMVQMHANDREEIKEVLAGDIAAAIGLKNVTTGDTLCDENNKIVLERMEFPEPVISVAVEPKSKADQEKMGVALGKLAQEDPSFRVRTDEESGQTIISGMGELHLDIIVDRMRREFKVEANIGKPQVAYRECIRKPVDVEGKFVRQSGGRGQYGHVKVKLEPLPLDDEDGENFIFVNEIVGGVVPKEYIPAVQQGIEEQMQNGCLAGYPLLGIKATLYDGSYHDVDSNEMAFKIAGSMAMKKGALEANPALLEPIMKVEVVTPEDYMGDVVGDLNRRRGLVQGMDEGPAGKVIRAEVPLSEMFGYATDLRSATQGRASYAMEFSRYMEAPSNIAEAIIKKG</sequence>
<dbReference type="EMBL" id="CP000514">
    <property type="protein sequence ID" value="ABM17813.1"/>
    <property type="molecule type" value="Genomic_DNA"/>
</dbReference>
<dbReference type="RefSeq" id="WP_011784244.1">
    <property type="nucleotide sequence ID" value="NC_008740.1"/>
</dbReference>
<dbReference type="SMR" id="A1TYJ4"/>
<dbReference type="STRING" id="351348.Maqu_0716"/>
<dbReference type="KEGG" id="maq:Maqu_0716"/>
<dbReference type="eggNOG" id="COG0480">
    <property type="taxonomic scope" value="Bacteria"/>
</dbReference>
<dbReference type="HOGENOM" id="CLU_002794_4_1_6"/>
<dbReference type="OrthoDB" id="9804431at2"/>
<dbReference type="Proteomes" id="UP000000998">
    <property type="component" value="Chromosome"/>
</dbReference>
<dbReference type="GO" id="GO:0005737">
    <property type="term" value="C:cytoplasm"/>
    <property type="evidence" value="ECO:0007669"/>
    <property type="project" value="UniProtKB-SubCell"/>
</dbReference>
<dbReference type="GO" id="GO:0005525">
    <property type="term" value="F:GTP binding"/>
    <property type="evidence" value="ECO:0007669"/>
    <property type="project" value="UniProtKB-UniRule"/>
</dbReference>
<dbReference type="GO" id="GO:0003924">
    <property type="term" value="F:GTPase activity"/>
    <property type="evidence" value="ECO:0007669"/>
    <property type="project" value="InterPro"/>
</dbReference>
<dbReference type="GO" id="GO:0097216">
    <property type="term" value="F:guanosine tetraphosphate binding"/>
    <property type="evidence" value="ECO:0007669"/>
    <property type="project" value="UniProtKB-ARBA"/>
</dbReference>
<dbReference type="GO" id="GO:0003746">
    <property type="term" value="F:translation elongation factor activity"/>
    <property type="evidence" value="ECO:0007669"/>
    <property type="project" value="UniProtKB-UniRule"/>
</dbReference>
<dbReference type="GO" id="GO:0032790">
    <property type="term" value="P:ribosome disassembly"/>
    <property type="evidence" value="ECO:0007669"/>
    <property type="project" value="TreeGrafter"/>
</dbReference>
<dbReference type="CDD" id="cd01886">
    <property type="entry name" value="EF-G"/>
    <property type="match status" value="1"/>
</dbReference>
<dbReference type="CDD" id="cd16262">
    <property type="entry name" value="EFG_III"/>
    <property type="match status" value="1"/>
</dbReference>
<dbReference type="CDD" id="cd01434">
    <property type="entry name" value="EFG_mtEFG1_IV"/>
    <property type="match status" value="1"/>
</dbReference>
<dbReference type="CDD" id="cd03713">
    <property type="entry name" value="EFG_mtEFG_C"/>
    <property type="match status" value="1"/>
</dbReference>
<dbReference type="CDD" id="cd04088">
    <property type="entry name" value="EFG_mtEFG_II"/>
    <property type="match status" value="1"/>
</dbReference>
<dbReference type="FunFam" id="2.40.30.10:FF:000006">
    <property type="entry name" value="Elongation factor G"/>
    <property type="match status" value="1"/>
</dbReference>
<dbReference type="FunFam" id="3.30.230.10:FF:000003">
    <property type="entry name" value="Elongation factor G"/>
    <property type="match status" value="1"/>
</dbReference>
<dbReference type="FunFam" id="3.30.70.240:FF:000001">
    <property type="entry name" value="Elongation factor G"/>
    <property type="match status" value="1"/>
</dbReference>
<dbReference type="FunFam" id="3.30.70.870:FF:000001">
    <property type="entry name" value="Elongation factor G"/>
    <property type="match status" value="1"/>
</dbReference>
<dbReference type="FunFam" id="3.40.50.300:FF:000029">
    <property type="entry name" value="Elongation factor G"/>
    <property type="match status" value="1"/>
</dbReference>
<dbReference type="Gene3D" id="3.30.230.10">
    <property type="match status" value="1"/>
</dbReference>
<dbReference type="Gene3D" id="3.30.70.240">
    <property type="match status" value="1"/>
</dbReference>
<dbReference type="Gene3D" id="3.30.70.870">
    <property type="entry name" value="Elongation Factor G (Translational Gtpase), domain 3"/>
    <property type="match status" value="1"/>
</dbReference>
<dbReference type="Gene3D" id="3.40.50.300">
    <property type="entry name" value="P-loop containing nucleotide triphosphate hydrolases"/>
    <property type="match status" value="1"/>
</dbReference>
<dbReference type="Gene3D" id="2.40.30.10">
    <property type="entry name" value="Translation factors"/>
    <property type="match status" value="1"/>
</dbReference>
<dbReference type="HAMAP" id="MF_00054_B">
    <property type="entry name" value="EF_G_EF_2_B"/>
    <property type="match status" value="1"/>
</dbReference>
<dbReference type="InterPro" id="IPR041095">
    <property type="entry name" value="EFG_II"/>
</dbReference>
<dbReference type="InterPro" id="IPR009022">
    <property type="entry name" value="EFG_III"/>
</dbReference>
<dbReference type="InterPro" id="IPR035647">
    <property type="entry name" value="EFG_III/V"/>
</dbReference>
<dbReference type="InterPro" id="IPR047872">
    <property type="entry name" value="EFG_IV"/>
</dbReference>
<dbReference type="InterPro" id="IPR035649">
    <property type="entry name" value="EFG_V"/>
</dbReference>
<dbReference type="InterPro" id="IPR000640">
    <property type="entry name" value="EFG_V-like"/>
</dbReference>
<dbReference type="InterPro" id="IPR004161">
    <property type="entry name" value="EFTu-like_2"/>
</dbReference>
<dbReference type="InterPro" id="IPR031157">
    <property type="entry name" value="G_TR_CS"/>
</dbReference>
<dbReference type="InterPro" id="IPR027417">
    <property type="entry name" value="P-loop_NTPase"/>
</dbReference>
<dbReference type="InterPro" id="IPR020568">
    <property type="entry name" value="Ribosomal_Su5_D2-typ_SF"/>
</dbReference>
<dbReference type="InterPro" id="IPR014721">
    <property type="entry name" value="Ribsml_uS5_D2-typ_fold_subgr"/>
</dbReference>
<dbReference type="InterPro" id="IPR005225">
    <property type="entry name" value="Small_GTP-bd"/>
</dbReference>
<dbReference type="InterPro" id="IPR000795">
    <property type="entry name" value="T_Tr_GTP-bd_dom"/>
</dbReference>
<dbReference type="InterPro" id="IPR009000">
    <property type="entry name" value="Transl_B-barrel_sf"/>
</dbReference>
<dbReference type="InterPro" id="IPR004540">
    <property type="entry name" value="Transl_elong_EFG/EF2"/>
</dbReference>
<dbReference type="InterPro" id="IPR005517">
    <property type="entry name" value="Transl_elong_EFG/EF2_IV"/>
</dbReference>
<dbReference type="NCBIfam" id="TIGR00484">
    <property type="entry name" value="EF-G"/>
    <property type="match status" value="1"/>
</dbReference>
<dbReference type="NCBIfam" id="NF009381">
    <property type="entry name" value="PRK12740.1-5"/>
    <property type="match status" value="1"/>
</dbReference>
<dbReference type="NCBIfam" id="TIGR00231">
    <property type="entry name" value="small_GTP"/>
    <property type="match status" value="1"/>
</dbReference>
<dbReference type="PANTHER" id="PTHR43261:SF1">
    <property type="entry name" value="RIBOSOME-RELEASING FACTOR 2, MITOCHONDRIAL"/>
    <property type="match status" value="1"/>
</dbReference>
<dbReference type="PANTHER" id="PTHR43261">
    <property type="entry name" value="TRANSLATION ELONGATION FACTOR G-RELATED"/>
    <property type="match status" value="1"/>
</dbReference>
<dbReference type="Pfam" id="PF00679">
    <property type="entry name" value="EFG_C"/>
    <property type="match status" value="1"/>
</dbReference>
<dbReference type="Pfam" id="PF14492">
    <property type="entry name" value="EFG_III"/>
    <property type="match status" value="1"/>
</dbReference>
<dbReference type="Pfam" id="PF03764">
    <property type="entry name" value="EFG_IV"/>
    <property type="match status" value="1"/>
</dbReference>
<dbReference type="Pfam" id="PF00009">
    <property type="entry name" value="GTP_EFTU"/>
    <property type="match status" value="1"/>
</dbReference>
<dbReference type="Pfam" id="PF03144">
    <property type="entry name" value="GTP_EFTU_D2"/>
    <property type="match status" value="1"/>
</dbReference>
<dbReference type="PRINTS" id="PR00315">
    <property type="entry name" value="ELONGATNFCT"/>
</dbReference>
<dbReference type="SMART" id="SM00838">
    <property type="entry name" value="EFG_C"/>
    <property type="match status" value="1"/>
</dbReference>
<dbReference type="SMART" id="SM00889">
    <property type="entry name" value="EFG_IV"/>
    <property type="match status" value="1"/>
</dbReference>
<dbReference type="SUPFAM" id="SSF54980">
    <property type="entry name" value="EF-G C-terminal domain-like"/>
    <property type="match status" value="2"/>
</dbReference>
<dbReference type="SUPFAM" id="SSF52540">
    <property type="entry name" value="P-loop containing nucleoside triphosphate hydrolases"/>
    <property type="match status" value="1"/>
</dbReference>
<dbReference type="SUPFAM" id="SSF54211">
    <property type="entry name" value="Ribosomal protein S5 domain 2-like"/>
    <property type="match status" value="1"/>
</dbReference>
<dbReference type="SUPFAM" id="SSF50447">
    <property type="entry name" value="Translation proteins"/>
    <property type="match status" value="1"/>
</dbReference>
<dbReference type="PROSITE" id="PS00301">
    <property type="entry name" value="G_TR_1"/>
    <property type="match status" value="1"/>
</dbReference>
<dbReference type="PROSITE" id="PS51722">
    <property type="entry name" value="G_TR_2"/>
    <property type="match status" value="1"/>
</dbReference>
<name>EFG_MARN8</name>
<comment type="function">
    <text evidence="1">Catalyzes the GTP-dependent ribosomal translocation step during translation elongation. During this step, the ribosome changes from the pre-translocational (PRE) to the post-translocational (POST) state as the newly formed A-site-bound peptidyl-tRNA and P-site-bound deacylated tRNA move to the P and E sites, respectively. Catalyzes the coordinated movement of the two tRNA molecules, the mRNA and conformational changes in the ribosome.</text>
</comment>
<comment type="subcellular location">
    <subcellularLocation>
        <location evidence="1">Cytoplasm</location>
    </subcellularLocation>
</comment>
<comment type="similarity">
    <text evidence="1">Belongs to the TRAFAC class translation factor GTPase superfamily. Classic translation factor GTPase family. EF-G/EF-2 subfamily.</text>
</comment>
<protein>
    <recommendedName>
        <fullName evidence="1">Elongation factor G</fullName>
        <shortName evidence="1">EF-G</shortName>
    </recommendedName>
</protein>
<organism>
    <name type="scientific">Marinobacter nauticus (strain ATCC 700491 / DSM 11845 / VT8)</name>
    <name type="common">Marinobacter aquaeolei</name>
    <dbReference type="NCBI Taxonomy" id="351348"/>
    <lineage>
        <taxon>Bacteria</taxon>
        <taxon>Pseudomonadati</taxon>
        <taxon>Pseudomonadota</taxon>
        <taxon>Gammaproteobacteria</taxon>
        <taxon>Pseudomonadales</taxon>
        <taxon>Marinobacteraceae</taxon>
        <taxon>Marinobacter</taxon>
    </lineage>
</organism>
<evidence type="ECO:0000255" key="1">
    <source>
        <dbReference type="HAMAP-Rule" id="MF_00054"/>
    </source>
</evidence>
<keyword id="KW-0963">Cytoplasm</keyword>
<keyword id="KW-0251">Elongation factor</keyword>
<keyword id="KW-0342">GTP-binding</keyword>
<keyword id="KW-0547">Nucleotide-binding</keyword>
<keyword id="KW-0648">Protein biosynthesis</keyword>